<name>BX17_LOXGA</name>
<keyword id="KW-0204">Cytolysis</keyword>
<keyword id="KW-1061">Dermonecrotic toxin</keyword>
<keyword id="KW-0903">Direct protein sequencing</keyword>
<keyword id="KW-1015">Disulfide bond</keyword>
<keyword id="KW-0354">Hemolysis</keyword>
<keyword id="KW-0442">Lipid degradation</keyword>
<keyword id="KW-0443">Lipid metabolism</keyword>
<keyword id="KW-0456">Lyase</keyword>
<keyword id="KW-0460">Magnesium</keyword>
<keyword id="KW-0479">Metal-binding</keyword>
<keyword id="KW-0964">Secreted</keyword>
<keyword id="KW-0800">Toxin</keyword>
<sequence>ADNRRPIWVMLLSSYWQDGNSLGVDAIMTNYPEDVK</sequence>
<organism>
    <name type="scientific">Loxosceles gaucho</name>
    <name type="common">Spider</name>
    <dbReference type="NCBI Taxonomy" id="58216"/>
    <lineage>
        <taxon>Eukaryota</taxon>
        <taxon>Metazoa</taxon>
        <taxon>Ecdysozoa</taxon>
        <taxon>Arthropoda</taxon>
        <taxon>Chelicerata</taxon>
        <taxon>Arachnida</taxon>
        <taxon>Araneae</taxon>
        <taxon>Araneomorphae</taxon>
        <taxon>Haplogynae</taxon>
        <taxon>Scytodoidea</taxon>
        <taxon>Sicariidae</taxon>
        <taxon>Loxosceles</taxon>
    </lineage>
</organism>
<evidence type="ECO:0000250" key="1"/>
<evidence type="ECO:0000250" key="2">
    <source>
        <dbReference type="UniProtKB" id="A0A0D4WTV1"/>
    </source>
</evidence>
<evidence type="ECO:0000250" key="3">
    <source>
        <dbReference type="UniProtKB" id="A0A0D4WV12"/>
    </source>
</evidence>
<evidence type="ECO:0000250" key="4">
    <source>
        <dbReference type="UniProtKB" id="P0CE80"/>
    </source>
</evidence>
<evidence type="ECO:0000250" key="5">
    <source>
        <dbReference type="UniProtKB" id="Q4ZFU2"/>
    </source>
</evidence>
<evidence type="ECO:0000250" key="6">
    <source>
        <dbReference type="UniProtKB" id="Q8I914"/>
    </source>
</evidence>
<evidence type="ECO:0000269" key="7">
    <source>
    </source>
</evidence>
<evidence type="ECO:0000305" key="8"/>
<evidence type="ECO:0000305" key="9">
    <source>
    </source>
</evidence>
<protein>
    <recommendedName>
        <fullName>Dermonecrotic toxin LgSicTox-beta-LOXN1/LOXN7</fullName>
        <ecNumber evidence="5">4.6.1.-</ecNumber>
    </recommendedName>
    <alternativeName>
        <fullName>Phospholipase D</fullName>
        <shortName>PLD</shortName>
    </alternativeName>
    <alternativeName>
        <fullName>Sphingomyelin phosphodiesterase D</fullName>
        <shortName>SMD</shortName>
        <shortName>SMase D</shortName>
        <shortName>Sphingomyelinase D</shortName>
    </alternativeName>
</protein>
<reference key="1">
    <citation type="journal article" date="2005" name="Proteomics">
        <title>Proteome analysis of brown spider venom: identification of loxnecrogin isoforms in Loxosceles gaucho venom.</title>
        <authorList>
            <person name="Machado L.F."/>
            <person name="Laugesen S."/>
            <person name="Botelho E.D."/>
            <person name="Ricart C.A.O."/>
            <person name="Fontes W."/>
            <person name="Barbaro K.C."/>
            <person name="Roepstorff P."/>
            <person name="Sousa M.V."/>
        </authorList>
    </citation>
    <scope>PROTEIN SEQUENCE</scope>
    <scope>SUBCELLULAR LOCATION</scope>
    <source>
        <tissue>Venom</tissue>
    </source>
</reference>
<proteinExistence type="evidence at protein level"/>
<accession>P0C2K3</accession>
<dbReference type="EC" id="4.6.1.-" evidence="5"/>
<dbReference type="ArachnoServer" id="AS000147">
    <property type="toxin name" value="Sphingomyelinase D (LOXN1) (N-terminal fragment)"/>
</dbReference>
<dbReference type="GO" id="GO:0005576">
    <property type="term" value="C:extracellular region"/>
    <property type="evidence" value="ECO:0007669"/>
    <property type="project" value="UniProtKB-SubCell"/>
</dbReference>
<dbReference type="GO" id="GO:0016829">
    <property type="term" value="F:lyase activity"/>
    <property type="evidence" value="ECO:0007669"/>
    <property type="project" value="UniProtKB-KW"/>
</dbReference>
<dbReference type="GO" id="GO:0046872">
    <property type="term" value="F:metal ion binding"/>
    <property type="evidence" value="ECO:0007669"/>
    <property type="project" value="UniProtKB-KW"/>
</dbReference>
<dbReference type="GO" id="GO:0090729">
    <property type="term" value="F:toxin activity"/>
    <property type="evidence" value="ECO:0007669"/>
    <property type="project" value="UniProtKB-KW"/>
</dbReference>
<dbReference type="GO" id="GO:0031640">
    <property type="term" value="P:killing of cells of another organism"/>
    <property type="evidence" value="ECO:0007669"/>
    <property type="project" value="UniProtKB-KW"/>
</dbReference>
<dbReference type="GO" id="GO:0016042">
    <property type="term" value="P:lipid catabolic process"/>
    <property type="evidence" value="ECO:0007669"/>
    <property type="project" value="UniProtKB-KW"/>
</dbReference>
<feature type="chain" id="PRO_0000279560" description="Dermonecrotic toxin LgSicTox-beta-LOXN1/LOXN7">
    <location>
        <begin position="1"/>
        <end position="36" status="greater than"/>
    </location>
</feature>
<feature type="non-consecutive residues" evidence="8">
    <location>
        <begin position="10"/>
        <end position="11"/>
    </location>
</feature>
<feature type="non-consecutive residues" evidence="8">
    <location>
        <begin position="21"/>
        <end position="22"/>
    </location>
</feature>
<feature type="non-terminal residue">
    <location>
        <position position="36"/>
    </location>
</feature>
<comment type="function">
    <text evidence="2 4">Dermonecrotic toxins cleave the phosphodiester linkage between the phosphate and headgroup of certain phospholipids (sphingolipid and lysolipid substrates), forming an alcohol (often choline) and a cyclic phosphate (By similarity). This toxin acts on sphingomyelin (SM) (By similarity). It may also act on ceramide phosphoethanolamine (CPE), lysophosphatidylcholine (LPC) and lysophosphatidylethanolamine (LPE), but not on lysophosphatidylserine (LPS), and lysophosphatidylglycerol (LPG) (By similarity). It acts by transphosphatidylation, releasing exclusively cyclic phosphate products as second products (By similarity). Induces dermonecrosis, hemolysis, increased vascular permeability, edema, inflammatory response, and platelet aggregation (By similarity).</text>
</comment>
<comment type="catalytic activity">
    <reaction evidence="2">
        <text>an N-(acyl)-sphingosylphosphocholine = an N-(acyl)-sphingosyl-1,3-cyclic phosphate + choline</text>
        <dbReference type="Rhea" id="RHEA:60652"/>
        <dbReference type="ChEBI" id="CHEBI:15354"/>
        <dbReference type="ChEBI" id="CHEBI:64583"/>
        <dbReference type="ChEBI" id="CHEBI:143892"/>
    </reaction>
</comment>
<comment type="catalytic activity">
    <reaction evidence="2">
        <text>an N-(acyl)-sphingosylphosphoethanolamine = an N-(acyl)-sphingosyl-1,3-cyclic phosphate + ethanolamine</text>
        <dbReference type="Rhea" id="RHEA:60648"/>
        <dbReference type="ChEBI" id="CHEBI:57603"/>
        <dbReference type="ChEBI" id="CHEBI:143891"/>
        <dbReference type="ChEBI" id="CHEBI:143892"/>
    </reaction>
</comment>
<comment type="catalytic activity">
    <reaction evidence="2">
        <text>a 1-acyl-sn-glycero-3-phosphocholine = a 1-acyl-sn-glycero-2,3-cyclic phosphate + choline</text>
        <dbReference type="Rhea" id="RHEA:60700"/>
        <dbReference type="ChEBI" id="CHEBI:15354"/>
        <dbReference type="ChEBI" id="CHEBI:58168"/>
        <dbReference type="ChEBI" id="CHEBI:143947"/>
    </reaction>
</comment>
<comment type="catalytic activity">
    <reaction evidence="2">
        <text>a 1-acyl-sn-glycero-3-phosphoethanolamine = a 1-acyl-sn-glycero-2,3-cyclic phosphate + ethanolamine</text>
        <dbReference type="Rhea" id="RHEA:60704"/>
        <dbReference type="ChEBI" id="CHEBI:57603"/>
        <dbReference type="ChEBI" id="CHEBI:64381"/>
        <dbReference type="ChEBI" id="CHEBI:143947"/>
    </reaction>
</comment>
<comment type="cofactor">
    <cofactor evidence="6">
        <name>Mg(2+)</name>
        <dbReference type="ChEBI" id="CHEBI:18420"/>
    </cofactor>
    <text evidence="6">Binds 1 Mg(2+) ion per subunit.</text>
</comment>
<comment type="subcellular location">
    <subcellularLocation>
        <location evidence="7">Secreted</location>
    </subcellularLocation>
</comment>
<comment type="tissue specificity">
    <text evidence="9">Expressed by the venom gland.</text>
</comment>
<comment type="PTM">
    <text evidence="1">Contains 2 disulfide bonds.</text>
</comment>
<comment type="miscellaneous">
    <text>LOXN1 (pI=4.41) and LOXN7 (pI=6.38) are not the same protein, but the partial sequence of LOXN7 (AA 1-9) is identical to the sequence of LOXN1.</text>
</comment>
<comment type="similarity">
    <text evidence="8">Belongs to the arthropod phospholipase D family. Class II subfamily.</text>
</comment>
<comment type="caution">
    <text evidence="2 3 5">The most common activity assay for dermonecrotic toxins detects enzymatic activity by monitoring choline release from substrate. Liberation of choline from sphingomyelin (SM) or lysophosphatidylcholine (LPC) is commonly assumed to result from substrate hydrolysis, giving either ceramide-1-phosphate (C1P) or lysophosphatidic acid (LPA), respectively, as a second product. However, two studies from Lajoie and colleagues (2013 and 2015) report the observation of exclusive formation of cyclic phosphate products as second products, resulting from intramolecular transphosphatidylation. Cyclic phosphates have vastly different biological properties from their monoester counterparts, and they may be relevant to the pathology of brown spider envenomation.</text>
</comment>